<sequence length="413" mass="45367">MQADLVLYNIGQLVTSRELDKTKKMDNIEVIENNGYIVIEKDKIVAVGSGEVLKEYLTPATEMVDLSGKLVTPGLIDSHTHLVHGGSRENEFAMKIAGVPYLEILEKGGGILSTLKSTRNASEQELIEKTLKSLRHMLELGVTTVEAKSGYGLNLEDELKQLEVTKILGYLQPVTLVSTFMAAHATPPEYKDNKEGYVQEVIKMLPIVKERNLAEFCDIFCEDKVFSVDESRRILTVAKELGYKLKIHADEIVSLGGVELAAELGATSAEHLMKITDSGINALANSNVIADLLPATSFNLMEHYAPARKMIEAGIQIALSTDYNPGSCPSENLQFVMQIGAAHLKMTPKEVFKSVTINAAKAIDKQDTIGSIEVGKKADITVFDAPSMAYFLYHFGINHTDSVYKNGKLVFKK</sequence>
<evidence type="ECO:0000255" key="1">
    <source>
        <dbReference type="HAMAP-Rule" id="MF_00372"/>
    </source>
</evidence>
<protein>
    <recommendedName>
        <fullName evidence="1">Imidazolonepropionase</fullName>
        <ecNumber evidence="1">3.5.2.7</ecNumber>
    </recommendedName>
    <alternativeName>
        <fullName evidence="1">Imidazolone-5-propionate hydrolase</fullName>
    </alternativeName>
</protein>
<feature type="chain" id="PRO_0000160948" description="Imidazolonepropionase">
    <location>
        <begin position="1"/>
        <end position="413"/>
    </location>
</feature>
<feature type="binding site" evidence="1">
    <location>
        <position position="79"/>
    </location>
    <ligand>
        <name>Fe(3+)</name>
        <dbReference type="ChEBI" id="CHEBI:29034"/>
    </ligand>
</feature>
<feature type="binding site" evidence="1">
    <location>
        <position position="79"/>
    </location>
    <ligand>
        <name>Zn(2+)</name>
        <dbReference type="ChEBI" id="CHEBI:29105"/>
    </ligand>
</feature>
<feature type="binding site" evidence="1">
    <location>
        <position position="81"/>
    </location>
    <ligand>
        <name>Fe(3+)</name>
        <dbReference type="ChEBI" id="CHEBI:29034"/>
    </ligand>
</feature>
<feature type="binding site" evidence="1">
    <location>
        <position position="81"/>
    </location>
    <ligand>
        <name>Zn(2+)</name>
        <dbReference type="ChEBI" id="CHEBI:29105"/>
    </ligand>
</feature>
<feature type="binding site" evidence="1">
    <location>
        <position position="88"/>
    </location>
    <ligand>
        <name>4-imidazolone-5-propanoate</name>
        <dbReference type="ChEBI" id="CHEBI:77893"/>
    </ligand>
</feature>
<feature type="binding site" evidence="1">
    <location>
        <position position="151"/>
    </location>
    <ligand>
        <name>4-imidazolone-5-propanoate</name>
        <dbReference type="ChEBI" id="CHEBI:77893"/>
    </ligand>
</feature>
<feature type="binding site" evidence="1">
    <location>
        <position position="151"/>
    </location>
    <ligand>
        <name>N-formimidoyl-L-glutamate</name>
        <dbReference type="ChEBI" id="CHEBI:58928"/>
    </ligand>
</feature>
<feature type="binding site" evidence="1">
    <location>
        <position position="184"/>
    </location>
    <ligand>
        <name>4-imidazolone-5-propanoate</name>
        <dbReference type="ChEBI" id="CHEBI:77893"/>
    </ligand>
</feature>
<feature type="binding site" evidence="1">
    <location>
        <position position="248"/>
    </location>
    <ligand>
        <name>Fe(3+)</name>
        <dbReference type="ChEBI" id="CHEBI:29034"/>
    </ligand>
</feature>
<feature type="binding site" evidence="1">
    <location>
        <position position="248"/>
    </location>
    <ligand>
        <name>Zn(2+)</name>
        <dbReference type="ChEBI" id="CHEBI:29105"/>
    </ligand>
</feature>
<feature type="binding site" evidence="1">
    <location>
        <position position="251"/>
    </location>
    <ligand>
        <name>4-imidazolone-5-propanoate</name>
        <dbReference type="ChEBI" id="CHEBI:77893"/>
    </ligand>
</feature>
<feature type="binding site" evidence="1">
    <location>
        <position position="322"/>
    </location>
    <ligand>
        <name>Fe(3+)</name>
        <dbReference type="ChEBI" id="CHEBI:29034"/>
    </ligand>
</feature>
<feature type="binding site" evidence="1">
    <location>
        <position position="322"/>
    </location>
    <ligand>
        <name>Zn(2+)</name>
        <dbReference type="ChEBI" id="CHEBI:29105"/>
    </ligand>
</feature>
<feature type="binding site" evidence="1">
    <location>
        <position position="324"/>
    </location>
    <ligand>
        <name>N-formimidoyl-L-glutamate</name>
        <dbReference type="ChEBI" id="CHEBI:58928"/>
    </ligand>
</feature>
<feature type="binding site" evidence="1">
    <location>
        <position position="326"/>
    </location>
    <ligand>
        <name>N-formimidoyl-L-glutamate</name>
        <dbReference type="ChEBI" id="CHEBI:58928"/>
    </ligand>
</feature>
<feature type="binding site" evidence="1">
    <location>
        <position position="327"/>
    </location>
    <ligand>
        <name>4-imidazolone-5-propanoate</name>
        <dbReference type="ChEBI" id="CHEBI:77893"/>
    </ligand>
</feature>
<accession>Q8RFG1</accession>
<comment type="function">
    <text evidence="1">Catalyzes the hydrolytic cleavage of the carbon-nitrogen bond in imidazolone-5-propanoate to yield N-formimidoyl-L-glutamate. It is the third step in the universal histidine degradation pathway.</text>
</comment>
<comment type="catalytic activity">
    <reaction evidence="1">
        <text>4-imidazolone-5-propanoate + H2O = N-formimidoyl-L-glutamate</text>
        <dbReference type="Rhea" id="RHEA:23660"/>
        <dbReference type="ChEBI" id="CHEBI:15377"/>
        <dbReference type="ChEBI" id="CHEBI:58928"/>
        <dbReference type="ChEBI" id="CHEBI:77893"/>
        <dbReference type="EC" id="3.5.2.7"/>
    </reaction>
</comment>
<comment type="cofactor">
    <cofactor evidence="1">
        <name>Zn(2+)</name>
        <dbReference type="ChEBI" id="CHEBI:29105"/>
    </cofactor>
    <cofactor evidence="1">
        <name>Fe(3+)</name>
        <dbReference type="ChEBI" id="CHEBI:29034"/>
    </cofactor>
    <text evidence="1">Binds 1 zinc or iron ion per subunit.</text>
</comment>
<comment type="pathway">
    <text evidence="1">Amino-acid degradation; L-histidine degradation into L-glutamate; N-formimidoyl-L-glutamate from L-histidine: step 3/3.</text>
</comment>
<comment type="subcellular location">
    <subcellularLocation>
        <location evidence="1">Cytoplasm</location>
    </subcellularLocation>
</comment>
<comment type="similarity">
    <text evidence="1">Belongs to the metallo-dependent hydrolases superfamily. HutI family.</text>
</comment>
<dbReference type="EC" id="3.5.2.7" evidence="1"/>
<dbReference type="EMBL" id="AE009951">
    <property type="protein sequence ID" value="AAL94936.1"/>
    <property type="molecule type" value="Genomic_DNA"/>
</dbReference>
<dbReference type="RefSeq" id="NP_603637.1">
    <property type="nucleotide sequence ID" value="NC_003454.1"/>
</dbReference>
<dbReference type="RefSeq" id="WP_011016618.1">
    <property type="nucleotide sequence ID" value="NZ_CP028101.1"/>
</dbReference>
<dbReference type="SMR" id="Q8RFG1"/>
<dbReference type="FunCoup" id="Q8RFG1">
    <property type="interactions" value="26"/>
</dbReference>
<dbReference type="STRING" id="190304.FN0740"/>
<dbReference type="PaxDb" id="190304-FN0740"/>
<dbReference type="EnsemblBacteria" id="AAL94936">
    <property type="protein sequence ID" value="AAL94936"/>
    <property type="gene ID" value="FN0740"/>
</dbReference>
<dbReference type="GeneID" id="79783733"/>
<dbReference type="KEGG" id="fnu:FN0740"/>
<dbReference type="PATRIC" id="fig|190304.8.peg.1303"/>
<dbReference type="eggNOG" id="COG1228">
    <property type="taxonomic scope" value="Bacteria"/>
</dbReference>
<dbReference type="HOGENOM" id="CLU_041647_0_1_0"/>
<dbReference type="InParanoid" id="Q8RFG1"/>
<dbReference type="BioCyc" id="FNUC190304:G1FZS-1326-MONOMER"/>
<dbReference type="UniPathway" id="UPA00379">
    <property type="reaction ID" value="UER00551"/>
</dbReference>
<dbReference type="Proteomes" id="UP000002521">
    <property type="component" value="Chromosome"/>
</dbReference>
<dbReference type="GO" id="GO:0005737">
    <property type="term" value="C:cytoplasm"/>
    <property type="evidence" value="ECO:0007669"/>
    <property type="project" value="UniProtKB-SubCell"/>
</dbReference>
<dbReference type="GO" id="GO:0050480">
    <property type="term" value="F:imidazolonepropionase activity"/>
    <property type="evidence" value="ECO:0000318"/>
    <property type="project" value="GO_Central"/>
</dbReference>
<dbReference type="GO" id="GO:0005506">
    <property type="term" value="F:iron ion binding"/>
    <property type="evidence" value="ECO:0007669"/>
    <property type="project" value="UniProtKB-UniRule"/>
</dbReference>
<dbReference type="GO" id="GO:0008270">
    <property type="term" value="F:zinc ion binding"/>
    <property type="evidence" value="ECO:0007669"/>
    <property type="project" value="UniProtKB-UniRule"/>
</dbReference>
<dbReference type="GO" id="GO:0006548">
    <property type="term" value="P:L-histidine catabolic process"/>
    <property type="evidence" value="ECO:0000318"/>
    <property type="project" value="GO_Central"/>
</dbReference>
<dbReference type="GO" id="GO:0019556">
    <property type="term" value="P:L-histidine catabolic process to glutamate and formamide"/>
    <property type="evidence" value="ECO:0007669"/>
    <property type="project" value="UniProtKB-UniPathway"/>
</dbReference>
<dbReference type="GO" id="GO:0019557">
    <property type="term" value="P:L-histidine catabolic process to glutamate and formate"/>
    <property type="evidence" value="ECO:0007669"/>
    <property type="project" value="UniProtKB-UniPathway"/>
</dbReference>
<dbReference type="CDD" id="cd01296">
    <property type="entry name" value="Imidazolone-5PH"/>
    <property type="match status" value="1"/>
</dbReference>
<dbReference type="FunFam" id="3.20.20.140:FF:000007">
    <property type="entry name" value="Imidazolonepropionase"/>
    <property type="match status" value="1"/>
</dbReference>
<dbReference type="Gene3D" id="3.20.20.140">
    <property type="entry name" value="Metal-dependent hydrolases"/>
    <property type="match status" value="1"/>
</dbReference>
<dbReference type="Gene3D" id="2.30.40.10">
    <property type="entry name" value="Urease, subunit C, domain 1"/>
    <property type="match status" value="1"/>
</dbReference>
<dbReference type="HAMAP" id="MF_00372">
    <property type="entry name" value="HutI"/>
    <property type="match status" value="1"/>
</dbReference>
<dbReference type="InterPro" id="IPR006680">
    <property type="entry name" value="Amidohydro-rel"/>
</dbReference>
<dbReference type="InterPro" id="IPR005920">
    <property type="entry name" value="HutI"/>
</dbReference>
<dbReference type="InterPro" id="IPR011059">
    <property type="entry name" value="Metal-dep_hydrolase_composite"/>
</dbReference>
<dbReference type="InterPro" id="IPR032466">
    <property type="entry name" value="Metal_Hydrolase"/>
</dbReference>
<dbReference type="NCBIfam" id="TIGR01224">
    <property type="entry name" value="hutI"/>
    <property type="match status" value="1"/>
</dbReference>
<dbReference type="PANTHER" id="PTHR42752">
    <property type="entry name" value="IMIDAZOLONEPROPIONASE"/>
    <property type="match status" value="1"/>
</dbReference>
<dbReference type="PANTHER" id="PTHR42752:SF1">
    <property type="entry name" value="IMIDAZOLONEPROPIONASE-RELATED"/>
    <property type="match status" value="1"/>
</dbReference>
<dbReference type="Pfam" id="PF01979">
    <property type="entry name" value="Amidohydro_1"/>
    <property type="match status" value="1"/>
</dbReference>
<dbReference type="SUPFAM" id="SSF51338">
    <property type="entry name" value="Composite domain of metallo-dependent hydrolases"/>
    <property type="match status" value="1"/>
</dbReference>
<dbReference type="SUPFAM" id="SSF51556">
    <property type="entry name" value="Metallo-dependent hydrolases"/>
    <property type="match status" value="1"/>
</dbReference>
<proteinExistence type="inferred from homology"/>
<reference key="1">
    <citation type="journal article" date="2002" name="J. Bacteriol.">
        <title>Genome sequence and analysis of the oral bacterium Fusobacterium nucleatum strain ATCC 25586.</title>
        <authorList>
            <person name="Kapatral V."/>
            <person name="Anderson I."/>
            <person name="Ivanova N."/>
            <person name="Reznik G."/>
            <person name="Los T."/>
            <person name="Lykidis A."/>
            <person name="Bhattacharyya A."/>
            <person name="Bartman A."/>
            <person name="Gardner W."/>
            <person name="Grechkin G."/>
            <person name="Zhu L."/>
            <person name="Vasieva O."/>
            <person name="Chu L."/>
            <person name="Kogan Y."/>
            <person name="Chaga O."/>
            <person name="Goltsman E."/>
            <person name="Bernal A."/>
            <person name="Larsen N."/>
            <person name="D'Souza M."/>
            <person name="Walunas T."/>
            <person name="Pusch G."/>
            <person name="Haselkorn R."/>
            <person name="Fonstein M."/>
            <person name="Kyrpides N.C."/>
            <person name="Overbeek R."/>
        </authorList>
    </citation>
    <scope>NUCLEOTIDE SEQUENCE [LARGE SCALE GENOMIC DNA]</scope>
    <source>
        <strain>ATCC 25586 / DSM 15643 / BCRC 10681 / CIP 101130 / JCM 8532 / KCTC 2640 / LMG 13131 / VPI 4355</strain>
    </source>
</reference>
<organism>
    <name type="scientific">Fusobacterium nucleatum subsp. nucleatum (strain ATCC 25586 / DSM 15643 / BCRC 10681 / CIP 101130 / JCM 8532 / KCTC 2640 / LMG 13131 / VPI 4355)</name>
    <dbReference type="NCBI Taxonomy" id="190304"/>
    <lineage>
        <taxon>Bacteria</taxon>
        <taxon>Fusobacteriati</taxon>
        <taxon>Fusobacteriota</taxon>
        <taxon>Fusobacteriia</taxon>
        <taxon>Fusobacteriales</taxon>
        <taxon>Fusobacteriaceae</taxon>
        <taxon>Fusobacterium</taxon>
    </lineage>
</organism>
<keyword id="KW-0963">Cytoplasm</keyword>
<keyword id="KW-0369">Histidine metabolism</keyword>
<keyword id="KW-0378">Hydrolase</keyword>
<keyword id="KW-0408">Iron</keyword>
<keyword id="KW-0479">Metal-binding</keyword>
<keyword id="KW-1185">Reference proteome</keyword>
<keyword id="KW-0862">Zinc</keyword>
<name>HUTI_FUSNN</name>
<gene>
    <name evidence="1" type="primary">hutI</name>
    <name type="ordered locus">FN0740</name>
</gene>